<gene>
    <name evidence="1" type="primary">rpoB</name>
    <name type="ordered locus">BCAH187_A0133</name>
</gene>
<organism>
    <name type="scientific">Bacillus cereus (strain AH187)</name>
    <dbReference type="NCBI Taxonomy" id="405534"/>
    <lineage>
        <taxon>Bacteria</taxon>
        <taxon>Bacillati</taxon>
        <taxon>Bacillota</taxon>
        <taxon>Bacilli</taxon>
        <taxon>Bacillales</taxon>
        <taxon>Bacillaceae</taxon>
        <taxon>Bacillus</taxon>
        <taxon>Bacillus cereus group</taxon>
    </lineage>
</organism>
<comment type="function">
    <text evidence="1">DNA-dependent RNA polymerase catalyzes the transcription of DNA into RNA using the four ribonucleoside triphosphates as substrates.</text>
</comment>
<comment type="catalytic activity">
    <reaction evidence="1">
        <text>RNA(n) + a ribonucleoside 5'-triphosphate = RNA(n+1) + diphosphate</text>
        <dbReference type="Rhea" id="RHEA:21248"/>
        <dbReference type="Rhea" id="RHEA-COMP:14527"/>
        <dbReference type="Rhea" id="RHEA-COMP:17342"/>
        <dbReference type="ChEBI" id="CHEBI:33019"/>
        <dbReference type="ChEBI" id="CHEBI:61557"/>
        <dbReference type="ChEBI" id="CHEBI:140395"/>
        <dbReference type="EC" id="2.7.7.6"/>
    </reaction>
</comment>
<comment type="subunit">
    <text evidence="1">The RNAP catalytic core consists of 2 alpha, 1 beta, 1 beta' and 1 omega subunit. When a sigma factor is associated with the core the holoenzyme is formed, which can initiate transcription.</text>
</comment>
<comment type="similarity">
    <text evidence="1">Belongs to the RNA polymerase beta chain family.</text>
</comment>
<accession>B7HQT6</accession>
<protein>
    <recommendedName>
        <fullName evidence="1">DNA-directed RNA polymerase subunit beta</fullName>
        <shortName evidence="1">RNAP subunit beta</shortName>
        <ecNumber evidence="1">2.7.7.6</ecNumber>
    </recommendedName>
    <alternativeName>
        <fullName evidence="1">RNA polymerase subunit beta</fullName>
    </alternativeName>
    <alternativeName>
        <fullName evidence="1">Transcriptase subunit beta</fullName>
    </alternativeName>
</protein>
<reference key="1">
    <citation type="submission" date="2008-10" db="EMBL/GenBank/DDBJ databases">
        <title>Genome sequence of Bacillus cereus AH187.</title>
        <authorList>
            <person name="Dodson R.J."/>
            <person name="Durkin A.S."/>
            <person name="Rosovitz M.J."/>
            <person name="Rasko D.A."/>
            <person name="Kolsto A.B."/>
            <person name="Okstad O.A."/>
            <person name="Ravel J."/>
            <person name="Sutton G."/>
        </authorList>
    </citation>
    <scope>NUCLEOTIDE SEQUENCE [LARGE SCALE GENOMIC DNA]</scope>
    <source>
        <strain>AH187</strain>
    </source>
</reference>
<name>RPOB_BACC7</name>
<evidence type="ECO:0000255" key="1">
    <source>
        <dbReference type="HAMAP-Rule" id="MF_01321"/>
    </source>
</evidence>
<evidence type="ECO:0000256" key="2">
    <source>
        <dbReference type="SAM" id="MobiDB-lite"/>
    </source>
</evidence>
<dbReference type="EC" id="2.7.7.6" evidence="1"/>
<dbReference type="EMBL" id="CP001177">
    <property type="protein sequence ID" value="ACJ79331.1"/>
    <property type="molecule type" value="Genomic_DNA"/>
</dbReference>
<dbReference type="SMR" id="B7HQT6"/>
<dbReference type="KEGG" id="bcr:BCAH187_A0133"/>
<dbReference type="HOGENOM" id="CLU_000524_4_1_9"/>
<dbReference type="Proteomes" id="UP000002214">
    <property type="component" value="Chromosome"/>
</dbReference>
<dbReference type="GO" id="GO:0000428">
    <property type="term" value="C:DNA-directed RNA polymerase complex"/>
    <property type="evidence" value="ECO:0007669"/>
    <property type="project" value="UniProtKB-KW"/>
</dbReference>
<dbReference type="GO" id="GO:0003677">
    <property type="term" value="F:DNA binding"/>
    <property type="evidence" value="ECO:0007669"/>
    <property type="project" value="UniProtKB-UniRule"/>
</dbReference>
<dbReference type="GO" id="GO:0003899">
    <property type="term" value="F:DNA-directed RNA polymerase activity"/>
    <property type="evidence" value="ECO:0007669"/>
    <property type="project" value="UniProtKB-UniRule"/>
</dbReference>
<dbReference type="GO" id="GO:0032549">
    <property type="term" value="F:ribonucleoside binding"/>
    <property type="evidence" value="ECO:0007669"/>
    <property type="project" value="InterPro"/>
</dbReference>
<dbReference type="GO" id="GO:0006351">
    <property type="term" value="P:DNA-templated transcription"/>
    <property type="evidence" value="ECO:0007669"/>
    <property type="project" value="UniProtKB-UniRule"/>
</dbReference>
<dbReference type="CDD" id="cd00653">
    <property type="entry name" value="RNA_pol_B_RPB2"/>
    <property type="match status" value="1"/>
</dbReference>
<dbReference type="FunFam" id="3.90.1800.10:FF:000001">
    <property type="entry name" value="DNA-directed RNA polymerase subunit beta"/>
    <property type="match status" value="1"/>
</dbReference>
<dbReference type="Gene3D" id="2.40.50.100">
    <property type="match status" value="1"/>
</dbReference>
<dbReference type="Gene3D" id="2.40.50.150">
    <property type="match status" value="1"/>
</dbReference>
<dbReference type="Gene3D" id="3.90.1100.10">
    <property type="match status" value="2"/>
</dbReference>
<dbReference type="Gene3D" id="2.30.150.10">
    <property type="entry name" value="DNA-directed RNA polymerase, beta subunit, external 1 domain"/>
    <property type="match status" value="1"/>
</dbReference>
<dbReference type="Gene3D" id="2.40.270.10">
    <property type="entry name" value="DNA-directed RNA polymerase, subunit 2, domain 6"/>
    <property type="match status" value="1"/>
</dbReference>
<dbReference type="Gene3D" id="3.90.1800.10">
    <property type="entry name" value="RNA polymerase alpha subunit dimerisation domain"/>
    <property type="match status" value="1"/>
</dbReference>
<dbReference type="Gene3D" id="3.90.1110.10">
    <property type="entry name" value="RNA polymerase Rpb2, domain 2"/>
    <property type="match status" value="1"/>
</dbReference>
<dbReference type="HAMAP" id="MF_01321">
    <property type="entry name" value="RNApol_bact_RpoB"/>
    <property type="match status" value="1"/>
</dbReference>
<dbReference type="InterPro" id="IPR042107">
    <property type="entry name" value="DNA-dir_RNA_pol_bsu_ext_1_sf"/>
</dbReference>
<dbReference type="InterPro" id="IPR019462">
    <property type="entry name" value="DNA-dir_RNA_pol_bsu_external_1"/>
</dbReference>
<dbReference type="InterPro" id="IPR015712">
    <property type="entry name" value="DNA-dir_RNA_pol_su2"/>
</dbReference>
<dbReference type="InterPro" id="IPR007120">
    <property type="entry name" value="DNA-dir_RNAP_su2_dom"/>
</dbReference>
<dbReference type="InterPro" id="IPR037033">
    <property type="entry name" value="DNA-dir_RNAP_su2_hyb_sf"/>
</dbReference>
<dbReference type="InterPro" id="IPR010243">
    <property type="entry name" value="RNA_pol_bsu_bac"/>
</dbReference>
<dbReference type="InterPro" id="IPR007121">
    <property type="entry name" value="RNA_pol_bsu_CS"/>
</dbReference>
<dbReference type="InterPro" id="IPR007644">
    <property type="entry name" value="RNA_pol_bsu_protrusion"/>
</dbReference>
<dbReference type="InterPro" id="IPR007642">
    <property type="entry name" value="RNA_pol_Rpb2_2"/>
</dbReference>
<dbReference type="InterPro" id="IPR037034">
    <property type="entry name" value="RNA_pol_Rpb2_2_sf"/>
</dbReference>
<dbReference type="InterPro" id="IPR007645">
    <property type="entry name" value="RNA_pol_Rpb2_3"/>
</dbReference>
<dbReference type="InterPro" id="IPR007641">
    <property type="entry name" value="RNA_pol_Rpb2_7"/>
</dbReference>
<dbReference type="InterPro" id="IPR014724">
    <property type="entry name" value="RNA_pol_RPB2_OB-fold"/>
</dbReference>
<dbReference type="NCBIfam" id="NF001616">
    <property type="entry name" value="PRK00405.1"/>
    <property type="match status" value="1"/>
</dbReference>
<dbReference type="NCBIfam" id="TIGR02013">
    <property type="entry name" value="rpoB"/>
    <property type="match status" value="1"/>
</dbReference>
<dbReference type="PANTHER" id="PTHR20856">
    <property type="entry name" value="DNA-DIRECTED RNA POLYMERASE I SUBUNIT 2"/>
    <property type="match status" value="1"/>
</dbReference>
<dbReference type="Pfam" id="PF04563">
    <property type="entry name" value="RNA_pol_Rpb2_1"/>
    <property type="match status" value="1"/>
</dbReference>
<dbReference type="Pfam" id="PF04561">
    <property type="entry name" value="RNA_pol_Rpb2_2"/>
    <property type="match status" value="2"/>
</dbReference>
<dbReference type="Pfam" id="PF04565">
    <property type="entry name" value="RNA_pol_Rpb2_3"/>
    <property type="match status" value="1"/>
</dbReference>
<dbReference type="Pfam" id="PF10385">
    <property type="entry name" value="RNA_pol_Rpb2_45"/>
    <property type="match status" value="1"/>
</dbReference>
<dbReference type="Pfam" id="PF00562">
    <property type="entry name" value="RNA_pol_Rpb2_6"/>
    <property type="match status" value="1"/>
</dbReference>
<dbReference type="Pfam" id="PF04560">
    <property type="entry name" value="RNA_pol_Rpb2_7"/>
    <property type="match status" value="1"/>
</dbReference>
<dbReference type="SUPFAM" id="SSF64484">
    <property type="entry name" value="beta and beta-prime subunits of DNA dependent RNA-polymerase"/>
    <property type="match status" value="1"/>
</dbReference>
<dbReference type="PROSITE" id="PS01166">
    <property type="entry name" value="RNA_POL_BETA"/>
    <property type="match status" value="1"/>
</dbReference>
<keyword id="KW-0240">DNA-directed RNA polymerase</keyword>
<keyword id="KW-0548">Nucleotidyltransferase</keyword>
<keyword id="KW-0804">Transcription</keyword>
<keyword id="KW-0808">Transferase</keyword>
<proteinExistence type="inferred from homology"/>
<sequence length="1177" mass="131893">MTGQLVQYGRHRQRRSYARISEVLELPNLIEIQTSSYQWFLDEGLREMFQDISPIEDFTGNLSLEFIDYSLGEPKYSVDECKERDVTYAAPLRVKVRLINKETGEVKEQDVFMGDFPLMTETGTFVINGAERVIVSQLVRSPSVYYSGKVDKNGKRGFTATVIPNRGAWLEYETDAKDVVYVRIDRTRKLPVTVLLRALGFGSDQEITELLGDNEYLSNTLEKDNTDSTEKALLEIYERLRPGEPPTVENAKSLLVSRFFDPKRYDLANVGRYKINKKLHIKNRLFNQRLAETLVDPETGEILAAEGTILDRRTLDRILPYLEKNIGFKTAKPMGGVVEGDVELQSIKIYAPESEGERVINVIGNANITRDVKHITPGDILASISYFFNLLYKVGDTDDIDHLGNRRLRSVGELLQNQFRIGLSRMERVVRERMSIQDTNAITPQALINIRPVIASIKEFFGSSQLSQFMDQTNPLAELTHKRRLSALGPGGLTRERAGFEVRDVHYSHYGRMCPIETPEGPNIGLINSLSSFAKVNEFGFIETPYRRVDPETGLVTGHVDYLTADEEDNYVVAQANMKLSEEGEFLDEDIVARFRGENIVTNKERIDYMDVSPKQVVSAATACIPFLENDDSNRALMGANMQRQAVPLMNPESPIVGTGMEYVSAKDSGAAVICKHPGIVERVEAREVWVRRYVEVDGQTVKGDLDRYKMQKFIRSNQGTCYNQRPIVSVGNEVVKGEILADGPSMELGELALGRNVLVGFMTWDGYNYEDAIIMSERLVKDDVYTSIHIEEYESEARDTKLGPEEITRDIPNVGEDALRNLDERGIIRVGAEVKDGDLLVGKVTPKGVTELTAEERLLHAIFGEKAREVRDTSLRVPHGGGGIILDVKVFNREDGDELPPGVNQLVRAYIVQKRKISEGDKMAGRHGNKGVISRILPEEDMPYLPDGTPIDIMLNPLGVPSRMNIGQVLELHLGMAARYLGIHIATPVFDGAREEDVWGTIEEAGMANDAKTILYDGRTGEPFDNRVSVGVMYMIKLAHMVDDKLHARSTGPYSLVTQQPLGGKAQFGGQRFGEMEVWALEAYGAAYTLQEILTVKSDDVVGRVKTYEAIVKGENVPEPGVPESFKVLIKELQSLGMDVKMMSSDDTEIEMRDTEDDDDHQSADKLNVEVETTKE</sequence>
<feature type="chain" id="PRO_1000141659" description="DNA-directed RNA polymerase subunit beta">
    <location>
        <begin position="1"/>
        <end position="1177"/>
    </location>
</feature>
<feature type="region of interest" description="Disordered" evidence="2">
    <location>
        <begin position="1147"/>
        <end position="1177"/>
    </location>
</feature>
<feature type="compositionally biased region" description="Acidic residues" evidence="2">
    <location>
        <begin position="1147"/>
        <end position="1161"/>
    </location>
</feature>
<feature type="compositionally biased region" description="Basic and acidic residues" evidence="2">
    <location>
        <begin position="1162"/>
        <end position="1177"/>
    </location>
</feature>